<gene>
    <name evidence="1" type="primary">murA</name>
    <name type="ordered locus">STM3307</name>
</gene>
<sequence length="419" mass="44741">MDKFRVQGPTTLQGEVTISGAKNAALPILFAALLAEEPVEIQNVPKLKDVDTSMKLLSQLGAKVERNGSVHIDASQVNVFCAPYDLVKTMRASIWALGPLVARFGQGQVSLPGGCTIGARPVDLHITGLEQLGATIKLEEGYVKASVEGRLKGAHIVMDKVSVGATVTIMCAATLAEGTTIIENAAREPEIVDTANFLVTLGAKIAGQGTDRITIEGVERLGGGVYRVLPDRIETGTFLVAAAISRGKILCRNAQPDTLDAVLAKLRDAGADIEVGEDWISLDMHGKRPKAVNVRTAPHPAFPTDMQAQFTLLNLVAEGTGFITETVFENRFMHVPELSRMGARAEIESNTVICHGVETLSGAQVMATDLRASASLVLAGCIAEGTTIVDRIYHIDRGYERIEDKLRALGANIERVKGE</sequence>
<comment type="function">
    <text evidence="1">Cell wall formation. Adds enolpyruvyl to UDP-N-acetylglucosamine.</text>
</comment>
<comment type="catalytic activity">
    <reaction evidence="1">
        <text>phosphoenolpyruvate + UDP-N-acetyl-alpha-D-glucosamine = UDP-N-acetyl-3-O-(1-carboxyvinyl)-alpha-D-glucosamine + phosphate</text>
        <dbReference type="Rhea" id="RHEA:18681"/>
        <dbReference type="ChEBI" id="CHEBI:43474"/>
        <dbReference type="ChEBI" id="CHEBI:57705"/>
        <dbReference type="ChEBI" id="CHEBI:58702"/>
        <dbReference type="ChEBI" id="CHEBI:68483"/>
        <dbReference type="EC" id="2.5.1.7"/>
    </reaction>
</comment>
<comment type="pathway">
    <text evidence="1">Cell wall biogenesis; peptidoglycan biosynthesis.</text>
</comment>
<comment type="subcellular location">
    <subcellularLocation>
        <location evidence="1">Cytoplasm</location>
    </subcellularLocation>
</comment>
<comment type="similarity">
    <text evidence="1">Belongs to the EPSP synthase family. MurA subfamily.</text>
</comment>
<protein>
    <recommendedName>
        <fullName evidence="1">UDP-N-acetylglucosamine 1-carboxyvinyltransferase</fullName>
        <ecNumber evidence="1">2.5.1.7</ecNumber>
    </recommendedName>
    <alternativeName>
        <fullName evidence="1">Enoylpyruvate transferase</fullName>
    </alternativeName>
    <alternativeName>
        <fullName evidence="1">UDP-N-acetylglucosamine enolpyruvyl transferase</fullName>
        <shortName evidence="1">EPT</shortName>
    </alternativeName>
</protein>
<proteinExistence type="inferred from homology"/>
<keyword id="KW-0131">Cell cycle</keyword>
<keyword id="KW-0132">Cell division</keyword>
<keyword id="KW-0133">Cell shape</keyword>
<keyword id="KW-0961">Cell wall biogenesis/degradation</keyword>
<keyword id="KW-0963">Cytoplasm</keyword>
<keyword id="KW-0573">Peptidoglycan synthesis</keyword>
<keyword id="KW-0670">Pyruvate</keyword>
<keyword id="KW-1185">Reference proteome</keyword>
<keyword id="KW-0808">Transferase</keyword>
<feature type="chain" id="PRO_0000178912" description="UDP-N-acetylglucosamine 1-carboxyvinyltransferase">
    <location>
        <begin position="1"/>
        <end position="419"/>
    </location>
</feature>
<feature type="active site" description="Proton donor" evidence="1">
    <location>
        <position position="115"/>
    </location>
</feature>
<feature type="binding site" evidence="1">
    <location>
        <begin position="22"/>
        <end position="23"/>
    </location>
    <ligand>
        <name>phosphoenolpyruvate</name>
        <dbReference type="ChEBI" id="CHEBI:58702"/>
    </ligand>
</feature>
<feature type="binding site" evidence="1">
    <location>
        <position position="91"/>
    </location>
    <ligand>
        <name>UDP-N-acetyl-alpha-D-glucosamine</name>
        <dbReference type="ChEBI" id="CHEBI:57705"/>
    </ligand>
</feature>
<feature type="binding site" evidence="1">
    <location>
        <begin position="120"/>
        <end position="124"/>
    </location>
    <ligand>
        <name>UDP-N-acetyl-alpha-D-glucosamine</name>
        <dbReference type="ChEBI" id="CHEBI:57705"/>
    </ligand>
</feature>
<feature type="binding site" evidence="1">
    <location>
        <begin position="160"/>
        <end position="163"/>
    </location>
    <ligand>
        <name>UDP-N-acetyl-alpha-D-glucosamine</name>
        <dbReference type="ChEBI" id="CHEBI:57705"/>
    </ligand>
</feature>
<feature type="binding site" evidence="1">
    <location>
        <position position="305"/>
    </location>
    <ligand>
        <name>UDP-N-acetyl-alpha-D-glucosamine</name>
        <dbReference type="ChEBI" id="CHEBI:57705"/>
    </ligand>
</feature>
<feature type="binding site" evidence="1">
    <location>
        <position position="327"/>
    </location>
    <ligand>
        <name>UDP-N-acetyl-alpha-D-glucosamine</name>
        <dbReference type="ChEBI" id="CHEBI:57705"/>
    </ligand>
</feature>
<feature type="modified residue" description="2-(S-cysteinyl)pyruvic acid O-phosphothioketal" evidence="1">
    <location>
        <position position="115"/>
    </location>
</feature>
<evidence type="ECO:0000255" key="1">
    <source>
        <dbReference type="HAMAP-Rule" id="MF_00111"/>
    </source>
</evidence>
<name>MURA_SALTY</name>
<accession>P65454</accession>
<accession>Q8XF63</accession>
<dbReference type="EC" id="2.5.1.7" evidence="1"/>
<dbReference type="EMBL" id="AE006468">
    <property type="protein sequence ID" value="AAL22176.1"/>
    <property type="molecule type" value="Genomic_DNA"/>
</dbReference>
<dbReference type="RefSeq" id="NP_462217.1">
    <property type="nucleotide sequence ID" value="NC_003197.2"/>
</dbReference>
<dbReference type="RefSeq" id="WP_000357288.1">
    <property type="nucleotide sequence ID" value="NC_003197.2"/>
</dbReference>
<dbReference type="SMR" id="P65454"/>
<dbReference type="STRING" id="99287.STM3307"/>
<dbReference type="PaxDb" id="99287-STM3307"/>
<dbReference type="GeneID" id="1254830"/>
<dbReference type="KEGG" id="stm:STM3307"/>
<dbReference type="PATRIC" id="fig|99287.12.peg.3508"/>
<dbReference type="HOGENOM" id="CLU_027387_0_0_6"/>
<dbReference type="OMA" id="MIEIGSW"/>
<dbReference type="PhylomeDB" id="P65454"/>
<dbReference type="BioCyc" id="SENT99287:STM3307-MONOMER"/>
<dbReference type="UniPathway" id="UPA00219"/>
<dbReference type="Proteomes" id="UP000001014">
    <property type="component" value="Chromosome"/>
</dbReference>
<dbReference type="GO" id="GO:0005737">
    <property type="term" value="C:cytoplasm"/>
    <property type="evidence" value="ECO:0007669"/>
    <property type="project" value="UniProtKB-SubCell"/>
</dbReference>
<dbReference type="GO" id="GO:0008760">
    <property type="term" value="F:UDP-N-acetylglucosamine 1-carboxyvinyltransferase activity"/>
    <property type="evidence" value="ECO:0000318"/>
    <property type="project" value="GO_Central"/>
</dbReference>
<dbReference type="GO" id="GO:0051301">
    <property type="term" value="P:cell division"/>
    <property type="evidence" value="ECO:0007669"/>
    <property type="project" value="UniProtKB-KW"/>
</dbReference>
<dbReference type="GO" id="GO:0071555">
    <property type="term" value="P:cell wall organization"/>
    <property type="evidence" value="ECO:0007669"/>
    <property type="project" value="UniProtKB-KW"/>
</dbReference>
<dbReference type="GO" id="GO:0009252">
    <property type="term" value="P:peptidoglycan biosynthetic process"/>
    <property type="evidence" value="ECO:0000318"/>
    <property type="project" value="GO_Central"/>
</dbReference>
<dbReference type="GO" id="GO:0008360">
    <property type="term" value="P:regulation of cell shape"/>
    <property type="evidence" value="ECO:0007669"/>
    <property type="project" value="UniProtKB-KW"/>
</dbReference>
<dbReference type="GO" id="GO:0019277">
    <property type="term" value="P:UDP-N-acetylgalactosamine biosynthetic process"/>
    <property type="evidence" value="ECO:0007669"/>
    <property type="project" value="InterPro"/>
</dbReference>
<dbReference type="CDD" id="cd01555">
    <property type="entry name" value="UdpNAET"/>
    <property type="match status" value="1"/>
</dbReference>
<dbReference type="FunFam" id="3.65.10.10:FF:000002">
    <property type="entry name" value="UDP-N-acetylglucosamine 1-carboxyvinyltransferase"/>
    <property type="match status" value="1"/>
</dbReference>
<dbReference type="Gene3D" id="3.65.10.10">
    <property type="entry name" value="Enolpyruvate transferase domain"/>
    <property type="match status" value="2"/>
</dbReference>
<dbReference type="HAMAP" id="MF_00111">
    <property type="entry name" value="MurA"/>
    <property type="match status" value="1"/>
</dbReference>
<dbReference type="InterPro" id="IPR001986">
    <property type="entry name" value="Enolpyruvate_Tfrase_dom"/>
</dbReference>
<dbReference type="InterPro" id="IPR036968">
    <property type="entry name" value="Enolpyruvate_Tfrase_sf"/>
</dbReference>
<dbReference type="InterPro" id="IPR050068">
    <property type="entry name" value="MurA_subfamily"/>
</dbReference>
<dbReference type="InterPro" id="IPR013792">
    <property type="entry name" value="RNA3'P_cycl/enolpyr_Trfase_a/b"/>
</dbReference>
<dbReference type="InterPro" id="IPR005750">
    <property type="entry name" value="UDP_GlcNAc_COvinyl_MurA"/>
</dbReference>
<dbReference type="NCBIfam" id="TIGR01072">
    <property type="entry name" value="murA"/>
    <property type="match status" value="1"/>
</dbReference>
<dbReference type="NCBIfam" id="NF006873">
    <property type="entry name" value="PRK09369.1"/>
    <property type="match status" value="1"/>
</dbReference>
<dbReference type="PANTHER" id="PTHR43783">
    <property type="entry name" value="UDP-N-ACETYLGLUCOSAMINE 1-CARBOXYVINYLTRANSFERASE"/>
    <property type="match status" value="1"/>
</dbReference>
<dbReference type="PANTHER" id="PTHR43783:SF1">
    <property type="entry name" value="UDP-N-ACETYLGLUCOSAMINE 1-CARBOXYVINYLTRANSFERASE"/>
    <property type="match status" value="1"/>
</dbReference>
<dbReference type="Pfam" id="PF00275">
    <property type="entry name" value="EPSP_synthase"/>
    <property type="match status" value="1"/>
</dbReference>
<dbReference type="SUPFAM" id="SSF55205">
    <property type="entry name" value="EPT/RTPC-like"/>
    <property type="match status" value="1"/>
</dbReference>
<organism>
    <name type="scientific">Salmonella typhimurium (strain LT2 / SGSC1412 / ATCC 700720)</name>
    <dbReference type="NCBI Taxonomy" id="99287"/>
    <lineage>
        <taxon>Bacteria</taxon>
        <taxon>Pseudomonadati</taxon>
        <taxon>Pseudomonadota</taxon>
        <taxon>Gammaproteobacteria</taxon>
        <taxon>Enterobacterales</taxon>
        <taxon>Enterobacteriaceae</taxon>
        <taxon>Salmonella</taxon>
    </lineage>
</organism>
<reference key="1">
    <citation type="journal article" date="2001" name="Nature">
        <title>Complete genome sequence of Salmonella enterica serovar Typhimurium LT2.</title>
        <authorList>
            <person name="McClelland M."/>
            <person name="Sanderson K.E."/>
            <person name="Spieth J."/>
            <person name="Clifton S.W."/>
            <person name="Latreille P."/>
            <person name="Courtney L."/>
            <person name="Porwollik S."/>
            <person name="Ali J."/>
            <person name="Dante M."/>
            <person name="Du F."/>
            <person name="Hou S."/>
            <person name="Layman D."/>
            <person name="Leonard S."/>
            <person name="Nguyen C."/>
            <person name="Scott K."/>
            <person name="Holmes A."/>
            <person name="Grewal N."/>
            <person name="Mulvaney E."/>
            <person name="Ryan E."/>
            <person name="Sun H."/>
            <person name="Florea L."/>
            <person name="Miller W."/>
            <person name="Stoneking T."/>
            <person name="Nhan M."/>
            <person name="Waterston R."/>
            <person name="Wilson R.K."/>
        </authorList>
    </citation>
    <scope>NUCLEOTIDE SEQUENCE [LARGE SCALE GENOMIC DNA]</scope>
    <source>
        <strain>LT2 / SGSC1412 / ATCC 700720</strain>
    </source>
</reference>